<reference key="1">
    <citation type="journal article" date="2009" name="J. Bacteriol.">
        <title>Genomic sequencing reveals regulatory mutations and recombinational events in the widely used MC4100 lineage of Escherichia coli K-12.</title>
        <authorList>
            <person name="Ferenci T."/>
            <person name="Zhou Z."/>
            <person name="Betteridge T."/>
            <person name="Ren Y."/>
            <person name="Liu Y."/>
            <person name="Feng L."/>
            <person name="Reeves P.R."/>
            <person name="Wang L."/>
        </authorList>
    </citation>
    <scope>NUCLEOTIDE SEQUENCE [LARGE SCALE GENOMIC DNA]</scope>
    <source>
        <strain>K12 / MC4100 / BW2952</strain>
    </source>
</reference>
<organism>
    <name type="scientific">Escherichia coli (strain K12 / MC4100 / BW2952)</name>
    <dbReference type="NCBI Taxonomy" id="595496"/>
    <lineage>
        <taxon>Bacteria</taxon>
        <taxon>Pseudomonadati</taxon>
        <taxon>Pseudomonadota</taxon>
        <taxon>Gammaproteobacteria</taxon>
        <taxon>Enterobacterales</taxon>
        <taxon>Enterobacteriaceae</taxon>
        <taxon>Escherichia</taxon>
    </lineage>
</organism>
<proteinExistence type="inferred from homology"/>
<evidence type="ECO:0000255" key="1">
    <source>
        <dbReference type="HAMAP-Rule" id="MF_01599"/>
    </source>
</evidence>
<accession>C4ZTM7</accession>
<keyword id="KW-0050">Antiport</keyword>
<keyword id="KW-0997">Cell inner membrane</keyword>
<keyword id="KW-1003">Cell membrane</keyword>
<keyword id="KW-0406">Ion transport</keyword>
<keyword id="KW-0472">Membrane</keyword>
<keyword id="KW-0915">Sodium</keyword>
<keyword id="KW-0739">Sodium transport</keyword>
<keyword id="KW-0812">Transmembrane</keyword>
<keyword id="KW-1133">Transmembrane helix</keyword>
<keyword id="KW-0813">Transport</keyword>
<feature type="chain" id="PRO_1000215676" description="Na(+)/H(+) antiporter NhaB">
    <location>
        <begin position="1"/>
        <end position="513"/>
    </location>
</feature>
<feature type="transmembrane region" description="Helical" evidence="1">
    <location>
        <begin position="23"/>
        <end position="43"/>
    </location>
</feature>
<feature type="transmembrane region" description="Helical" evidence="1">
    <location>
        <begin position="52"/>
        <end position="72"/>
    </location>
</feature>
<feature type="transmembrane region" description="Helical" evidence="1">
    <location>
        <begin position="97"/>
        <end position="117"/>
    </location>
</feature>
<feature type="transmembrane region" description="Helical" evidence="1">
    <location>
        <begin position="120"/>
        <end position="140"/>
    </location>
</feature>
<feature type="transmembrane region" description="Helical" evidence="1">
    <location>
        <begin position="144"/>
        <end position="164"/>
    </location>
</feature>
<feature type="transmembrane region" description="Helical" evidence="1">
    <location>
        <begin position="202"/>
        <end position="222"/>
    </location>
</feature>
<feature type="transmembrane region" description="Helical" evidence="1">
    <location>
        <begin position="238"/>
        <end position="258"/>
    </location>
</feature>
<feature type="transmembrane region" description="Helical" evidence="1">
    <location>
        <begin position="303"/>
        <end position="323"/>
    </location>
</feature>
<feature type="transmembrane region" description="Helical" evidence="1">
    <location>
        <begin position="348"/>
        <end position="368"/>
    </location>
</feature>
<feature type="transmembrane region" description="Helical" evidence="1">
    <location>
        <begin position="391"/>
        <end position="411"/>
    </location>
</feature>
<feature type="transmembrane region" description="Helical" evidence="1">
    <location>
        <begin position="447"/>
        <end position="467"/>
    </location>
</feature>
<feature type="transmembrane region" description="Helical" evidence="1">
    <location>
        <begin position="475"/>
        <end position="495"/>
    </location>
</feature>
<dbReference type="EMBL" id="CP001396">
    <property type="protein sequence ID" value="ACR65563.1"/>
    <property type="molecule type" value="Genomic_DNA"/>
</dbReference>
<dbReference type="RefSeq" id="WP_000406391.1">
    <property type="nucleotide sequence ID" value="NC_012759.1"/>
</dbReference>
<dbReference type="SMR" id="C4ZTM7"/>
<dbReference type="GeneID" id="75203299"/>
<dbReference type="KEGG" id="ebw:BWG_1011"/>
<dbReference type="HOGENOM" id="CLU_041110_0_0_6"/>
<dbReference type="GO" id="GO:0005886">
    <property type="term" value="C:plasma membrane"/>
    <property type="evidence" value="ECO:0007669"/>
    <property type="project" value="UniProtKB-SubCell"/>
</dbReference>
<dbReference type="GO" id="GO:0015385">
    <property type="term" value="F:sodium:proton antiporter activity"/>
    <property type="evidence" value="ECO:0007669"/>
    <property type="project" value="InterPro"/>
</dbReference>
<dbReference type="HAMAP" id="MF_01599">
    <property type="entry name" value="NhaB"/>
    <property type="match status" value="1"/>
</dbReference>
<dbReference type="InterPro" id="IPR004671">
    <property type="entry name" value="Na+/H+_antiporter_NhaB"/>
</dbReference>
<dbReference type="NCBIfam" id="TIGR00774">
    <property type="entry name" value="NhaB"/>
    <property type="match status" value="1"/>
</dbReference>
<dbReference type="NCBIfam" id="NF007093">
    <property type="entry name" value="PRK09547.1"/>
    <property type="match status" value="1"/>
</dbReference>
<dbReference type="PANTHER" id="PTHR43302:SF1">
    <property type="entry name" value="NA(+)_H(+) ANTIPORTER NHAB"/>
    <property type="match status" value="1"/>
</dbReference>
<dbReference type="PANTHER" id="PTHR43302">
    <property type="entry name" value="TRANSPORTER ARSB-RELATED"/>
    <property type="match status" value="1"/>
</dbReference>
<dbReference type="Pfam" id="PF06450">
    <property type="entry name" value="NhaB"/>
    <property type="match status" value="1"/>
</dbReference>
<sequence length="513" mass="56728">MEISWGRALWRNFLGQSPDWYKLALIIFLIVNPLIFLISPFVAGWLLVAEFIFTLAMALKCYPLLPGGLLAIEAVFIGMTSAEHVREEVAANLEVLLLLMFMVAGIYFMKQLLLFIFTRLLLSIRSKMLLSLSFCVAAAFLSAFLDALTVVAVVISVAVGFYGIYHRVASSRTEDTDLQDDSHIDKHYKVVLEQFRGFLRSLMMHAGVGTALGGVMTMVGEPQNLIIAKAAGWHFGDFFLRMSPVTVPVLICGLLTCLLVEKLRWFGYGETLPEKVREVLQQFDDQSRHQRTRQDKIRLIVQAIIGVWLVTALALHLAEVGLIGLSVIILATSLTGVTDEHAIGKAFTESLPFTALLTVFFSVVAVIIDQQLFSPIIQFVLQASEHAQLSLFYIFNGLLSSISDNVFVGTIYINEAKAAMESGAITLKQYELLAVAINTGTNLPSVATPNGQAAFLFLLTSALAPLIRLSYGRMVWMALPYTLVLTLVGLLCVEFTLAPVTEWFMQMGWIATL</sequence>
<gene>
    <name evidence="1" type="primary">nhaB</name>
    <name type="ordered locus">BWG_1011</name>
</gene>
<name>NHAB_ECOBW</name>
<protein>
    <recommendedName>
        <fullName evidence="1">Na(+)/H(+) antiporter NhaB</fullName>
    </recommendedName>
    <alternativeName>
        <fullName evidence="1">Sodium/proton antiporter NhaB</fullName>
    </alternativeName>
</protein>
<comment type="function">
    <text evidence="1">Na(+)/H(+) antiporter that extrudes sodium in exchange for external protons.</text>
</comment>
<comment type="catalytic activity">
    <reaction evidence="1">
        <text>2 Na(+)(in) + 3 H(+)(out) = 2 Na(+)(out) + 3 H(+)(in)</text>
        <dbReference type="Rhea" id="RHEA:29247"/>
        <dbReference type="ChEBI" id="CHEBI:15378"/>
        <dbReference type="ChEBI" id="CHEBI:29101"/>
    </reaction>
    <physiologicalReaction direction="left-to-right" evidence="1">
        <dbReference type="Rhea" id="RHEA:29248"/>
    </physiologicalReaction>
</comment>
<comment type="subcellular location">
    <subcellularLocation>
        <location evidence="1">Cell inner membrane</location>
        <topology evidence="1">Multi-pass membrane protein</topology>
    </subcellularLocation>
</comment>
<comment type="similarity">
    <text evidence="1">Belongs to the NhaB Na(+)/H(+) (TC 2.A.34) antiporter family.</text>
</comment>